<protein>
    <recommendedName>
        <fullName evidence="2">Peptide chain release factor 2</fullName>
        <shortName evidence="2">RF-2</shortName>
    </recommendedName>
</protein>
<accession>P66025</accession>
<accession>Q8XD56</accession>
<gene>
    <name evidence="2" type="primary">prfB</name>
    <name type="ordered locus">SF2877</name>
    <name type="ordered locus">S3076</name>
</gene>
<proteinExistence type="inferred from homology"/>
<dbReference type="EMBL" id="AE005674">
    <property type="status" value="NOT_ANNOTATED_CDS"/>
    <property type="molecule type" value="Genomic_DNA"/>
</dbReference>
<dbReference type="EMBL" id="AE014073">
    <property type="protein sequence ID" value="AAP18184.1"/>
    <property type="molecule type" value="Genomic_DNA"/>
</dbReference>
<dbReference type="RefSeq" id="WP_001701073.1">
    <property type="nucleotide sequence ID" value="NZ_WPGW01000018.1"/>
</dbReference>
<dbReference type="SMR" id="P66025"/>
<dbReference type="GeneID" id="93779111"/>
<dbReference type="KEGG" id="sfx:S3076"/>
<dbReference type="HOGENOM" id="CLU_220733_1_0_6"/>
<dbReference type="Proteomes" id="UP000001006">
    <property type="component" value="Chromosome"/>
</dbReference>
<dbReference type="Proteomes" id="UP000002673">
    <property type="component" value="Chromosome"/>
</dbReference>
<dbReference type="GO" id="GO:0005737">
    <property type="term" value="C:cytoplasm"/>
    <property type="evidence" value="ECO:0007669"/>
    <property type="project" value="UniProtKB-SubCell"/>
</dbReference>
<dbReference type="GO" id="GO:0016149">
    <property type="term" value="F:translation release factor activity, codon specific"/>
    <property type="evidence" value="ECO:0007669"/>
    <property type="project" value="UniProtKB-UniRule"/>
</dbReference>
<dbReference type="GO" id="GO:0075523">
    <property type="term" value="P:viral translational frameshifting"/>
    <property type="evidence" value="ECO:0007669"/>
    <property type="project" value="UniProtKB-KW"/>
</dbReference>
<dbReference type="FunFam" id="1.20.58.410:FF:000001">
    <property type="entry name" value="Peptide chain release factor 2"/>
    <property type="match status" value="1"/>
</dbReference>
<dbReference type="FunFam" id="3.30.160.20:FF:000010">
    <property type="entry name" value="Peptide chain release factor 2"/>
    <property type="match status" value="1"/>
</dbReference>
<dbReference type="Gene3D" id="3.30.160.20">
    <property type="match status" value="1"/>
</dbReference>
<dbReference type="Gene3D" id="3.30.70.1660">
    <property type="match status" value="1"/>
</dbReference>
<dbReference type="Gene3D" id="1.20.58.410">
    <property type="entry name" value="Release factor"/>
    <property type="match status" value="1"/>
</dbReference>
<dbReference type="HAMAP" id="MF_00094">
    <property type="entry name" value="Rel_fac_2"/>
    <property type="match status" value="1"/>
</dbReference>
<dbReference type="InterPro" id="IPR005139">
    <property type="entry name" value="PCRF"/>
</dbReference>
<dbReference type="InterPro" id="IPR000352">
    <property type="entry name" value="Pep_chain_release_fac_I"/>
</dbReference>
<dbReference type="InterPro" id="IPR045853">
    <property type="entry name" value="Pep_chain_release_fac_I_sf"/>
</dbReference>
<dbReference type="InterPro" id="IPR004374">
    <property type="entry name" value="PrfB"/>
</dbReference>
<dbReference type="NCBIfam" id="TIGR00020">
    <property type="entry name" value="prfB"/>
    <property type="match status" value="1"/>
</dbReference>
<dbReference type="PANTHER" id="PTHR43116:SF3">
    <property type="entry name" value="CLASS I PEPTIDE CHAIN RELEASE FACTOR"/>
    <property type="match status" value="1"/>
</dbReference>
<dbReference type="PANTHER" id="PTHR43116">
    <property type="entry name" value="PEPTIDE CHAIN RELEASE FACTOR 2"/>
    <property type="match status" value="1"/>
</dbReference>
<dbReference type="Pfam" id="PF03462">
    <property type="entry name" value="PCRF"/>
    <property type="match status" value="1"/>
</dbReference>
<dbReference type="Pfam" id="PF00472">
    <property type="entry name" value="RF-1"/>
    <property type="match status" value="1"/>
</dbReference>
<dbReference type="SMART" id="SM00937">
    <property type="entry name" value="PCRF"/>
    <property type="match status" value="1"/>
</dbReference>
<dbReference type="SUPFAM" id="SSF75620">
    <property type="entry name" value="Release factor"/>
    <property type="match status" value="1"/>
</dbReference>
<dbReference type="PROSITE" id="PS00745">
    <property type="entry name" value="RF_PROK_I"/>
    <property type="match status" value="1"/>
</dbReference>
<reference key="1">
    <citation type="journal article" date="2002" name="Nucleic Acids Res.">
        <title>Genome sequence of Shigella flexneri 2a: insights into pathogenicity through comparison with genomes of Escherichia coli K12 and O157.</title>
        <authorList>
            <person name="Jin Q."/>
            <person name="Yuan Z."/>
            <person name="Xu J."/>
            <person name="Wang Y."/>
            <person name="Shen Y."/>
            <person name="Lu W."/>
            <person name="Wang J."/>
            <person name="Liu H."/>
            <person name="Yang J."/>
            <person name="Yang F."/>
            <person name="Zhang X."/>
            <person name="Zhang J."/>
            <person name="Yang G."/>
            <person name="Wu H."/>
            <person name="Qu D."/>
            <person name="Dong J."/>
            <person name="Sun L."/>
            <person name="Xue Y."/>
            <person name="Zhao A."/>
            <person name="Gao Y."/>
            <person name="Zhu J."/>
            <person name="Kan B."/>
            <person name="Ding K."/>
            <person name="Chen S."/>
            <person name="Cheng H."/>
            <person name="Yao Z."/>
            <person name="He B."/>
            <person name="Chen R."/>
            <person name="Ma D."/>
            <person name="Qiang B."/>
            <person name="Wen Y."/>
            <person name="Hou Y."/>
            <person name="Yu J."/>
        </authorList>
    </citation>
    <scope>NUCLEOTIDE SEQUENCE [LARGE SCALE GENOMIC DNA]</scope>
    <source>
        <strain>301 / Serotype 2a</strain>
    </source>
</reference>
<reference key="2">
    <citation type="journal article" date="2003" name="Infect. Immun.">
        <title>Complete genome sequence and comparative genomics of Shigella flexneri serotype 2a strain 2457T.</title>
        <authorList>
            <person name="Wei J."/>
            <person name="Goldberg M.B."/>
            <person name="Burland V."/>
            <person name="Venkatesan M.M."/>
            <person name="Deng W."/>
            <person name="Fournier G."/>
            <person name="Mayhew G.F."/>
            <person name="Plunkett G. III"/>
            <person name="Rose D.J."/>
            <person name="Darling A."/>
            <person name="Mau B."/>
            <person name="Perna N.T."/>
            <person name="Payne S.M."/>
            <person name="Runyen-Janecky L.J."/>
            <person name="Zhou S."/>
            <person name="Schwartz D.C."/>
            <person name="Blattner F.R."/>
        </authorList>
    </citation>
    <scope>NUCLEOTIDE SEQUENCE [LARGE SCALE GENOMIC DNA]</scope>
    <source>
        <strain>ATCC 700930 / 2457T / Serotype 2a</strain>
    </source>
</reference>
<name>RF2_SHIFL</name>
<evidence type="ECO:0000250" key="1"/>
<evidence type="ECO:0000255" key="2">
    <source>
        <dbReference type="HAMAP-Rule" id="MF_00094"/>
    </source>
</evidence>
<comment type="function">
    <text evidence="2">Peptide chain release factor 2 directs the termination of translation in response to the peptide chain termination codons UGA and UAA.</text>
</comment>
<comment type="subcellular location">
    <subcellularLocation>
        <location evidence="2">Cytoplasm</location>
    </subcellularLocation>
</comment>
<comment type="PTM">
    <text evidence="2">Methylated by PrmC. Methylation increases the termination efficiency of RF2.</text>
</comment>
<comment type="miscellaneous">
    <text evidence="1">The gene for this protein contains a UGA in-frame termination codon after Leu-25; a naturally occurring frameshift enables complete translation of RF-2. This provides a mechanism for the protein to regulate its own production (By similarity).</text>
</comment>
<comment type="similarity">
    <text evidence="2">Belongs to the prokaryotic/mitochondrial release factor family.</text>
</comment>
<feature type="chain" id="PRO_0000166844" description="Peptide chain release factor 2">
    <location>
        <begin position="1"/>
        <end position="365"/>
    </location>
</feature>
<feature type="modified residue" description="N5-methylglutamine" evidence="2">
    <location>
        <position position="252"/>
    </location>
</feature>
<keyword id="KW-0963">Cytoplasm</keyword>
<keyword id="KW-0488">Methylation</keyword>
<keyword id="KW-0648">Protein biosynthesis</keyword>
<keyword id="KW-1185">Reference proteome</keyword>
<keyword id="KW-0688">Ribosomal frameshifting</keyword>
<organism>
    <name type="scientific">Shigella flexneri</name>
    <dbReference type="NCBI Taxonomy" id="623"/>
    <lineage>
        <taxon>Bacteria</taxon>
        <taxon>Pseudomonadati</taxon>
        <taxon>Pseudomonadota</taxon>
        <taxon>Gammaproteobacteria</taxon>
        <taxon>Enterobacterales</taxon>
        <taxon>Enterobacteriaceae</taxon>
        <taxon>Shigella</taxon>
    </lineage>
</organism>
<sequence length="365" mass="41221">MFEINPVNNRIQDLTERSDVLRGYLDYDAKKERLEEVNAELEQPDVWNEPERAQALGKERSSLEAVVDTLDQMKQGLEDVSGLLELAVEADDEETFNEAVAELDALEEKLAQLEFRRMFSGEYDSADCYLDIQAGSGGTEAQDWASMLERMYLRWAESRGFKTEIIEESEGEVAGIKSVTIKISGDYAYGWLRTETGVHRLVRKSPFDSGGRRHTSFSSAFVYPEVDDDIDIEINPADLRIDVYRASGAGGQHVNRTESAVRITHIPTGIVTQCQNDRSQHKNKDQAMKQMKAKLYELEMQKKNAEKQAMEDNKSDIGWGSQIRSYVLDDSRIKDLRTGVETRNTQAVLDGSLDQFIEASLKAGL</sequence>